<accession>B0CH28</accession>
<organism>
    <name type="scientific">Brucella suis (strain ATCC 23445 / NCTC 10510)</name>
    <dbReference type="NCBI Taxonomy" id="470137"/>
    <lineage>
        <taxon>Bacteria</taxon>
        <taxon>Pseudomonadati</taxon>
        <taxon>Pseudomonadota</taxon>
        <taxon>Alphaproteobacteria</taxon>
        <taxon>Hyphomicrobiales</taxon>
        <taxon>Brucellaceae</taxon>
        <taxon>Brucella/Ochrobactrum group</taxon>
        <taxon>Brucella</taxon>
    </lineage>
</organism>
<comment type="function">
    <text evidence="1">Protein S19 forms a complex with S13 that binds strongly to the 16S ribosomal RNA.</text>
</comment>
<comment type="similarity">
    <text evidence="1">Belongs to the universal ribosomal protein uS19 family.</text>
</comment>
<keyword id="KW-0687">Ribonucleoprotein</keyword>
<keyword id="KW-0689">Ribosomal protein</keyword>
<keyword id="KW-0694">RNA-binding</keyword>
<keyword id="KW-0699">rRNA-binding</keyword>
<gene>
    <name evidence="1" type="primary">rpsS</name>
    <name type="ordered locus">BSUIS_A1278</name>
</gene>
<feature type="chain" id="PRO_1000081760" description="Small ribosomal subunit protein uS19">
    <location>
        <begin position="1"/>
        <end position="92"/>
    </location>
</feature>
<dbReference type="EMBL" id="CP000911">
    <property type="protein sequence ID" value="ABY38329.1"/>
    <property type="molecule type" value="Genomic_DNA"/>
</dbReference>
<dbReference type="RefSeq" id="WP_002964358.1">
    <property type="nucleotide sequence ID" value="NC_010169.1"/>
</dbReference>
<dbReference type="SMR" id="B0CH28"/>
<dbReference type="GeneID" id="97533528"/>
<dbReference type="KEGG" id="bmt:BSUIS_A1278"/>
<dbReference type="HOGENOM" id="CLU_144911_0_1_5"/>
<dbReference type="Proteomes" id="UP000008545">
    <property type="component" value="Chromosome I"/>
</dbReference>
<dbReference type="GO" id="GO:0005737">
    <property type="term" value="C:cytoplasm"/>
    <property type="evidence" value="ECO:0007669"/>
    <property type="project" value="UniProtKB-ARBA"/>
</dbReference>
<dbReference type="GO" id="GO:0015935">
    <property type="term" value="C:small ribosomal subunit"/>
    <property type="evidence" value="ECO:0007669"/>
    <property type="project" value="InterPro"/>
</dbReference>
<dbReference type="GO" id="GO:0019843">
    <property type="term" value="F:rRNA binding"/>
    <property type="evidence" value="ECO:0007669"/>
    <property type="project" value="UniProtKB-UniRule"/>
</dbReference>
<dbReference type="GO" id="GO:0003735">
    <property type="term" value="F:structural constituent of ribosome"/>
    <property type="evidence" value="ECO:0007669"/>
    <property type="project" value="InterPro"/>
</dbReference>
<dbReference type="GO" id="GO:0000028">
    <property type="term" value="P:ribosomal small subunit assembly"/>
    <property type="evidence" value="ECO:0007669"/>
    <property type="project" value="TreeGrafter"/>
</dbReference>
<dbReference type="GO" id="GO:0006412">
    <property type="term" value="P:translation"/>
    <property type="evidence" value="ECO:0007669"/>
    <property type="project" value="UniProtKB-UniRule"/>
</dbReference>
<dbReference type="FunFam" id="3.30.860.10:FF:000001">
    <property type="entry name" value="30S ribosomal protein S19"/>
    <property type="match status" value="1"/>
</dbReference>
<dbReference type="Gene3D" id="3.30.860.10">
    <property type="entry name" value="30s Ribosomal Protein S19, Chain A"/>
    <property type="match status" value="1"/>
</dbReference>
<dbReference type="HAMAP" id="MF_00531">
    <property type="entry name" value="Ribosomal_uS19"/>
    <property type="match status" value="1"/>
</dbReference>
<dbReference type="InterPro" id="IPR002222">
    <property type="entry name" value="Ribosomal_uS19"/>
</dbReference>
<dbReference type="InterPro" id="IPR005732">
    <property type="entry name" value="Ribosomal_uS19_bac-type"/>
</dbReference>
<dbReference type="InterPro" id="IPR020934">
    <property type="entry name" value="Ribosomal_uS19_CS"/>
</dbReference>
<dbReference type="InterPro" id="IPR023575">
    <property type="entry name" value="Ribosomal_uS19_SF"/>
</dbReference>
<dbReference type="NCBIfam" id="TIGR01050">
    <property type="entry name" value="rpsS_bact"/>
    <property type="match status" value="1"/>
</dbReference>
<dbReference type="PANTHER" id="PTHR11880">
    <property type="entry name" value="RIBOSOMAL PROTEIN S19P FAMILY MEMBER"/>
    <property type="match status" value="1"/>
</dbReference>
<dbReference type="PANTHER" id="PTHR11880:SF8">
    <property type="entry name" value="SMALL RIBOSOMAL SUBUNIT PROTEIN US19M"/>
    <property type="match status" value="1"/>
</dbReference>
<dbReference type="Pfam" id="PF00203">
    <property type="entry name" value="Ribosomal_S19"/>
    <property type="match status" value="1"/>
</dbReference>
<dbReference type="PIRSF" id="PIRSF002144">
    <property type="entry name" value="Ribosomal_S19"/>
    <property type="match status" value="1"/>
</dbReference>
<dbReference type="PRINTS" id="PR00975">
    <property type="entry name" value="RIBOSOMALS19"/>
</dbReference>
<dbReference type="SUPFAM" id="SSF54570">
    <property type="entry name" value="Ribosomal protein S19"/>
    <property type="match status" value="1"/>
</dbReference>
<dbReference type="PROSITE" id="PS00323">
    <property type="entry name" value="RIBOSOMAL_S19"/>
    <property type="match status" value="1"/>
</dbReference>
<name>RS19_BRUSI</name>
<sequence length="92" mass="10444">MARSVWKGPFVDGYLLKKAEKVREGGRNEVIKMWSRRSTILPQFVGLTFGVYNGNKHVPVSVSEEMVGHKFGEFAPTRTYYGHGADKKAKRK</sequence>
<protein>
    <recommendedName>
        <fullName evidence="1">Small ribosomal subunit protein uS19</fullName>
    </recommendedName>
    <alternativeName>
        <fullName evidence="2">30S ribosomal protein S19</fullName>
    </alternativeName>
</protein>
<evidence type="ECO:0000255" key="1">
    <source>
        <dbReference type="HAMAP-Rule" id="MF_00531"/>
    </source>
</evidence>
<evidence type="ECO:0000305" key="2"/>
<proteinExistence type="inferred from homology"/>
<reference key="1">
    <citation type="submission" date="2007-12" db="EMBL/GenBank/DDBJ databases">
        <title>Brucella suis ATCC 23445 whole genome shotgun sequencing project.</title>
        <authorList>
            <person name="Setubal J.C."/>
            <person name="Bowns C."/>
            <person name="Boyle S."/>
            <person name="Crasta O.R."/>
            <person name="Czar M.J."/>
            <person name="Dharmanolla C."/>
            <person name="Gillespie J.J."/>
            <person name="Kenyon R.W."/>
            <person name="Lu J."/>
            <person name="Mane S."/>
            <person name="Mohapatra S."/>
            <person name="Nagrani S."/>
            <person name="Purkayastha A."/>
            <person name="Rajasimha H.K."/>
            <person name="Shallom J.M."/>
            <person name="Shallom S."/>
            <person name="Shukla M."/>
            <person name="Snyder E.E."/>
            <person name="Sobral B.W."/>
            <person name="Wattam A.R."/>
            <person name="Will R."/>
            <person name="Williams K."/>
            <person name="Yoo H."/>
            <person name="Bruce D."/>
            <person name="Detter C."/>
            <person name="Munk C."/>
            <person name="Brettin T.S."/>
        </authorList>
    </citation>
    <scope>NUCLEOTIDE SEQUENCE [LARGE SCALE GENOMIC DNA]</scope>
    <source>
        <strain>ATCC 23445 / NCTC 10510</strain>
    </source>
</reference>